<comment type="subcellular location">
    <subcellularLocation>
        <location evidence="1">Cytoplasm</location>
    </subcellularLocation>
</comment>
<comment type="similarity">
    <text evidence="2">Belongs to the eukaryotic ribosomal protein eS4 family.</text>
</comment>
<comment type="sequence caution" evidence="2">
    <conflict type="frameshift">
        <sequence resource="EMBL-CDS" id="CAA75242"/>
    </conflict>
</comment>
<protein>
    <recommendedName>
        <fullName evidence="2">Small ribosomal subunit protein eS4</fullName>
    </recommendedName>
    <alternativeName>
        <fullName>40S ribosomal protein S4</fullName>
    </alternativeName>
    <alternativeName>
        <fullName>SCAR protein SS620</fullName>
    </alternativeName>
</protein>
<name>RS4_ORYSJ</name>
<reference key="1">
    <citation type="submission" date="1997-10" db="EMBL/GenBank/DDBJ databases">
        <title>Cloning and expression of a cDNA encoding ribosomal protein S4 from rice (Oryza sativa var japonica).</title>
        <authorList>
            <person name="Qu L.J."/>
            <person name="Zhang Y."/>
            <person name="Li D."/>
            <person name="Liu M."/>
            <person name="Gu H."/>
            <person name="Chen Z."/>
        </authorList>
    </citation>
    <scope>NUCLEOTIDE SEQUENCE [MRNA]</scope>
    <source>
        <strain>cv. Zhonghua 8</strain>
        <tissue>Flower</tissue>
    </source>
</reference>
<reference key="2">
    <citation type="journal article" date="2005" name="Nature">
        <title>The map-based sequence of the rice genome.</title>
        <authorList>
            <consortium name="International rice genome sequencing project (IRGSP)"/>
        </authorList>
    </citation>
    <scope>NUCLEOTIDE SEQUENCE [LARGE SCALE GENOMIC DNA]</scope>
    <source>
        <strain>cv. Nipponbare</strain>
    </source>
</reference>
<reference key="3">
    <citation type="journal article" date="2013" name="Rice">
        <title>Improvement of the Oryza sativa Nipponbare reference genome using next generation sequence and optical map data.</title>
        <authorList>
            <person name="Kawahara Y."/>
            <person name="de la Bastide M."/>
            <person name="Hamilton J.P."/>
            <person name="Kanamori H."/>
            <person name="McCombie W.R."/>
            <person name="Ouyang S."/>
            <person name="Schwartz D.C."/>
            <person name="Tanaka T."/>
            <person name="Wu J."/>
            <person name="Zhou S."/>
            <person name="Childs K.L."/>
            <person name="Davidson R.M."/>
            <person name="Lin H."/>
            <person name="Quesada-Ocampo L."/>
            <person name="Vaillancourt B."/>
            <person name="Sakai H."/>
            <person name="Lee S.S."/>
            <person name="Kim J."/>
            <person name="Numa H."/>
            <person name="Itoh T."/>
            <person name="Buell C.R."/>
            <person name="Matsumoto T."/>
        </authorList>
    </citation>
    <scope>GENOME REANNOTATION</scope>
    <source>
        <strain>cv. Nipponbare</strain>
    </source>
</reference>
<reference key="4">
    <citation type="submission" date="1993-12" db="EMBL/GenBank/DDBJ databases">
        <authorList>
            <person name="Uchimiya H."/>
        </authorList>
    </citation>
    <scope>NUCLEOTIDE SEQUENCE [MRNA] OF 53-142</scope>
</reference>
<organism>
    <name type="scientific">Oryza sativa subsp. japonica</name>
    <name type="common">Rice</name>
    <dbReference type="NCBI Taxonomy" id="39947"/>
    <lineage>
        <taxon>Eukaryota</taxon>
        <taxon>Viridiplantae</taxon>
        <taxon>Streptophyta</taxon>
        <taxon>Embryophyta</taxon>
        <taxon>Tracheophyta</taxon>
        <taxon>Spermatophyta</taxon>
        <taxon>Magnoliopsida</taxon>
        <taxon>Liliopsida</taxon>
        <taxon>Poales</taxon>
        <taxon>Poaceae</taxon>
        <taxon>BOP clade</taxon>
        <taxon>Oryzoideae</taxon>
        <taxon>Oryzeae</taxon>
        <taxon>Oryzinae</taxon>
        <taxon>Oryza</taxon>
        <taxon>Oryza sativa</taxon>
    </lineage>
</organism>
<accession>P49398</accession>
<accession>O24235</accession>
<accession>Q6ETD5</accession>
<sequence length="265" mass="29865">MARGLKKHLKRLNAPKHWMLDKLGGAFAPKPSSGPHKSRECLPLILIIRNRLKYALTYREVISILMQRHVLVDGKVRTDKTYPAGFMDVISIPKTGENYRLLYDTKGRFRLQSVKDEDAKFKLCKVRSVQFGQKGIPYLNTYDGRTIRYPDPIIKANDTIKIDLETNKIVDFIKFDVGNVVMVTGGRNTGRVGVIKNREKHKGSFETIHVEDALGHQFATRLGNVFTIGKGNKPWVSLPKGKGIKLSIIEEQRKRDAAAQAAANA</sequence>
<proteinExistence type="evidence at transcript level"/>
<dbReference type="EMBL" id="Y15009">
    <property type="protein sequence ID" value="CAA75242.1"/>
    <property type="status" value="ALT_FRAME"/>
    <property type="molecule type" value="mRNA"/>
</dbReference>
<dbReference type="EMBL" id="AP004851">
    <property type="protein sequence ID" value="BAD28085.1"/>
    <property type="molecule type" value="Genomic_DNA"/>
</dbReference>
<dbReference type="EMBL" id="AP014958">
    <property type="protein sequence ID" value="BAS76564.1"/>
    <property type="molecule type" value="Genomic_DNA"/>
</dbReference>
<dbReference type="EMBL" id="D25237">
    <property type="protein sequence ID" value="BAA04961.1"/>
    <property type="molecule type" value="mRNA"/>
</dbReference>
<dbReference type="PIR" id="T04113">
    <property type="entry name" value="T04113"/>
</dbReference>
<dbReference type="PIR" id="T04308">
    <property type="entry name" value="T04308"/>
</dbReference>
<dbReference type="RefSeq" id="XP_015625833.1">
    <property type="nucleotide sequence ID" value="XM_015770347.1"/>
</dbReference>
<dbReference type="SMR" id="P49398"/>
<dbReference type="FunCoup" id="P49398">
    <property type="interactions" value="1951"/>
</dbReference>
<dbReference type="STRING" id="39947.P49398"/>
<dbReference type="PaxDb" id="39947-P49398"/>
<dbReference type="EnsemblPlants" id="Os02t0105900-01">
    <property type="protein sequence ID" value="Os02t0105900-01"/>
    <property type="gene ID" value="Os02g0105900"/>
</dbReference>
<dbReference type="Gramene" id="Os02t0105900-01">
    <property type="protein sequence ID" value="Os02t0105900-01"/>
    <property type="gene ID" value="Os02g0105900"/>
</dbReference>
<dbReference type="eggNOG" id="KOG0378">
    <property type="taxonomic scope" value="Eukaryota"/>
</dbReference>
<dbReference type="HOGENOM" id="CLU_060400_1_0_1"/>
<dbReference type="InParanoid" id="P49398"/>
<dbReference type="OMA" id="GHIQLNL"/>
<dbReference type="OrthoDB" id="622770at2759"/>
<dbReference type="Proteomes" id="UP000000763">
    <property type="component" value="Chromosome 2"/>
</dbReference>
<dbReference type="Proteomes" id="UP000059680">
    <property type="component" value="Chromosome 2"/>
</dbReference>
<dbReference type="ExpressionAtlas" id="P49398">
    <property type="expression patterns" value="baseline and differential"/>
</dbReference>
<dbReference type="GO" id="GO:0022627">
    <property type="term" value="C:cytosolic small ribosomal subunit"/>
    <property type="evidence" value="ECO:0000318"/>
    <property type="project" value="GO_Central"/>
</dbReference>
<dbReference type="GO" id="GO:0003723">
    <property type="term" value="F:RNA binding"/>
    <property type="evidence" value="ECO:0000318"/>
    <property type="project" value="GO_Central"/>
</dbReference>
<dbReference type="GO" id="GO:0019843">
    <property type="term" value="F:rRNA binding"/>
    <property type="evidence" value="ECO:0007669"/>
    <property type="project" value="UniProtKB-KW"/>
</dbReference>
<dbReference type="GO" id="GO:0003735">
    <property type="term" value="F:structural constituent of ribosome"/>
    <property type="evidence" value="ECO:0000318"/>
    <property type="project" value="GO_Central"/>
</dbReference>
<dbReference type="GO" id="GO:0006412">
    <property type="term" value="P:translation"/>
    <property type="evidence" value="ECO:0000318"/>
    <property type="project" value="GO_Central"/>
</dbReference>
<dbReference type="CDD" id="cd06087">
    <property type="entry name" value="KOW_RPS4"/>
    <property type="match status" value="1"/>
</dbReference>
<dbReference type="CDD" id="cd00165">
    <property type="entry name" value="S4"/>
    <property type="match status" value="1"/>
</dbReference>
<dbReference type="FunFam" id="2.30.30.30:FF:000005">
    <property type="entry name" value="40S ribosomal protein S4"/>
    <property type="match status" value="1"/>
</dbReference>
<dbReference type="FunFam" id="2.40.50.740:FF:000001">
    <property type="entry name" value="40S ribosomal protein S4"/>
    <property type="match status" value="1"/>
</dbReference>
<dbReference type="FunFam" id="3.10.290.10:FF:000002">
    <property type="entry name" value="40S ribosomal protein S4"/>
    <property type="match status" value="1"/>
</dbReference>
<dbReference type="Gene3D" id="2.30.30.30">
    <property type="match status" value="1"/>
</dbReference>
<dbReference type="Gene3D" id="2.40.50.740">
    <property type="match status" value="1"/>
</dbReference>
<dbReference type="Gene3D" id="3.10.290.10">
    <property type="entry name" value="RNA-binding S4 domain"/>
    <property type="match status" value="1"/>
</dbReference>
<dbReference type="HAMAP" id="MF_00485">
    <property type="entry name" value="Ribosomal_eS4"/>
    <property type="match status" value="1"/>
</dbReference>
<dbReference type="InterPro" id="IPR005824">
    <property type="entry name" value="KOW"/>
</dbReference>
<dbReference type="InterPro" id="IPR014722">
    <property type="entry name" value="Rib_uL2_dom2"/>
</dbReference>
<dbReference type="InterPro" id="IPR000876">
    <property type="entry name" value="Ribosomal_eS4"/>
</dbReference>
<dbReference type="InterPro" id="IPR032277">
    <property type="entry name" value="Ribosomal_eS4_C"/>
</dbReference>
<dbReference type="InterPro" id="IPR013845">
    <property type="entry name" value="Ribosomal_eS4_central_region"/>
</dbReference>
<dbReference type="InterPro" id="IPR038237">
    <property type="entry name" value="Ribosomal_eS4_central_sf"/>
</dbReference>
<dbReference type="InterPro" id="IPR041982">
    <property type="entry name" value="Ribosomal_eS4_KOW"/>
</dbReference>
<dbReference type="InterPro" id="IPR013843">
    <property type="entry name" value="Ribosomal_eS4_N"/>
</dbReference>
<dbReference type="InterPro" id="IPR018199">
    <property type="entry name" value="Ribosomal_eS4_N_CS"/>
</dbReference>
<dbReference type="InterPro" id="IPR002942">
    <property type="entry name" value="S4_RNA-bd"/>
</dbReference>
<dbReference type="InterPro" id="IPR036986">
    <property type="entry name" value="S4_RNA-bd_sf"/>
</dbReference>
<dbReference type="NCBIfam" id="NF003312">
    <property type="entry name" value="PRK04313.1"/>
    <property type="match status" value="1"/>
</dbReference>
<dbReference type="PANTHER" id="PTHR11581">
    <property type="entry name" value="30S/40S RIBOSOMAL PROTEIN S4"/>
    <property type="match status" value="1"/>
</dbReference>
<dbReference type="PANTHER" id="PTHR11581:SF40">
    <property type="entry name" value="SMALL RIBOSOMAL SUBUNIT PROTEIN ES4"/>
    <property type="match status" value="1"/>
</dbReference>
<dbReference type="Pfam" id="PF16121">
    <property type="entry name" value="40S_S4_C"/>
    <property type="match status" value="1"/>
</dbReference>
<dbReference type="Pfam" id="PF00467">
    <property type="entry name" value="KOW"/>
    <property type="match status" value="1"/>
</dbReference>
<dbReference type="Pfam" id="PF00900">
    <property type="entry name" value="Ribosomal_S4e"/>
    <property type="match status" value="1"/>
</dbReference>
<dbReference type="Pfam" id="PF08071">
    <property type="entry name" value="RS4NT"/>
    <property type="match status" value="1"/>
</dbReference>
<dbReference type="Pfam" id="PF01479">
    <property type="entry name" value="S4"/>
    <property type="match status" value="1"/>
</dbReference>
<dbReference type="PIRSF" id="PIRSF002116">
    <property type="entry name" value="Ribosomal_S4"/>
    <property type="match status" value="1"/>
</dbReference>
<dbReference type="SMART" id="SM00739">
    <property type="entry name" value="KOW"/>
    <property type="match status" value="1"/>
</dbReference>
<dbReference type="SMART" id="SM00363">
    <property type="entry name" value="S4"/>
    <property type="match status" value="1"/>
</dbReference>
<dbReference type="PROSITE" id="PS00528">
    <property type="entry name" value="RIBOSOMAL_S4E"/>
    <property type="match status" value="1"/>
</dbReference>
<dbReference type="PROSITE" id="PS50889">
    <property type="entry name" value="S4"/>
    <property type="match status" value="1"/>
</dbReference>
<feature type="chain" id="PRO_0000130835" description="Small ribosomal subunit protein eS4">
    <location>
        <begin position="1"/>
        <end position="265"/>
    </location>
</feature>
<feature type="domain" description="S4 RNA-binding">
    <location>
        <begin position="42"/>
        <end position="104"/>
    </location>
</feature>
<feature type="sequence conflict" description="In Ref. 4; BAA04961." evidence="2" ref="4">
    <original>P</original>
    <variation>R</variation>
    <location>
        <position position="137"/>
    </location>
</feature>
<feature type="sequence conflict" description="In Ref. 4; BAA04961." evidence="2" ref="4">
    <original>TY</original>
    <variation>NL</variation>
    <location>
        <begin position="141"/>
        <end position="142"/>
    </location>
</feature>
<gene>
    <name type="primary">RPS4</name>
    <name type="synonym">SS620</name>
    <name type="ordered locus">Os02g0105900</name>
    <name type="ordered locus">LOC_Os02g01560</name>
    <name type="ORF">OJ1359_D06.12</name>
</gene>
<evidence type="ECO:0000250" key="1"/>
<evidence type="ECO:0000305" key="2"/>
<keyword id="KW-0963">Cytoplasm</keyword>
<keyword id="KW-1185">Reference proteome</keyword>
<keyword id="KW-0687">Ribonucleoprotein</keyword>
<keyword id="KW-0689">Ribosomal protein</keyword>
<keyword id="KW-0694">RNA-binding</keyword>
<keyword id="KW-0699">rRNA-binding</keyword>